<keyword id="KW-0175">Coiled coil</keyword>
<keyword id="KW-0963">Cytoplasm</keyword>
<keyword id="KW-1185">Reference proteome</keyword>
<name>TMAR_VIBCH</name>
<accession>Q9KLK2</accession>
<proteinExistence type="inferred from homology"/>
<sequence length="106" mass="12662">MNSVFEIVSLARRKNKLQRELDDNEKKVRDNRKRVELLVNLLDYIKPNMSHEEILGIIKNMKSDYEDRVDDHIIKSAEISKERRDISRRIKDLTEHDKQMTQGKKA</sequence>
<gene>
    <name evidence="1" type="primary">tmaR</name>
    <name type="ordered locus">VC_A0741</name>
</gene>
<protein>
    <recommendedName>
        <fullName evidence="1">Pole-localizer protein TmaR</fullName>
    </recommendedName>
</protein>
<feature type="chain" id="PRO_0000072770" description="Pole-localizer protein TmaR">
    <location>
        <begin position="1"/>
        <end position="106"/>
    </location>
</feature>
<feature type="coiled-coil region" evidence="1">
    <location>
        <begin position="7"/>
        <end position="34"/>
    </location>
</feature>
<organism>
    <name type="scientific">Vibrio cholerae serotype O1 (strain ATCC 39315 / El Tor Inaba N16961)</name>
    <dbReference type="NCBI Taxonomy" id="243277"/>
    <lineage>
        <taxon>Bacteria</taxon>
        <taxon>Pseudomonadati</taxon>
        <taxon>Pseudomonadota</taxon>
        <taxon>Gammaproteobacteria</taxon>
        <taxon>Vibrionales</taxon>
        <taxon>Vibrionaceae</taxon>
        <taxon>Vibrio</taxon>
    </lineage>
</organism>
<evidence type="ECO:0000255" key="1">
    <source>
        <dbReference type="HAMAP-Rule" id="MF_00683"/>
    </source>
</evidence>
<comment type="function">
    <text evidence="1">Pole-localizer protein involved in the regulation of several cellular processes.</text>
</comment>
<comment type="subcellular location">
    <subcellularLocation>
        <location evidence="1">Cytoplasm</location>
    </subcellularLocation>
</comment>
<comment type="similarity">
    <text evidence="1">Belongs to the pole-localizer TmaR family.</text>
</comment>
<reference key="1">
    <citation type="journal article" date="2000" name="Nature">
        <title>DNA sequence of both chromosomes of the cholera pathogen Vibrio cholerae.</title>
        <authorList>
            <person name="Heidelberg J.F."/>
            <person name="Eisen J.A."/>
            <person name="Nelson W.C."/>
            <person name="Clayton R.A."/>
            <person name="Gwinn M.L."/>
            <person name="Dodson R.J."/>
            <person name="Haft D.H."/>
            <person name="Hickey E.K."/>
            <person name="Peterson J.D."/>
            <person name="Umayam L.A."/>
            <person name="Gill S.R."/>
            <person name="Nelson K.E."/>
            <person name="Read T.D."/>
            <person name="Tettelin H."/>
            <person name="Richardson D.L."/>
            <person name="Ermolaeva M.D."/>
            <person name="Vamathevan J.J."/>
            <person name="Bass S."/>
            <person name="Qin H."/>
            <person name="Dragoi I."/>
            <person name="Sellers P."/>
            <person name="McDonald L.A."/>
            <person name="Utterback T.R."/>
            <person name="Fleischmann R.D."/>
            <person name="Nierman W.C."/>
            <person name="White O."/>
            <person name="Salzberg S.L."/>
            <person name="Smith H.O."/>
            <person name="Colwell R.R."/>
            <person name="Mekalanos J.J."/>
            <person name="Venter J.C."/>
            <person name="Fraser C.M."/>
        </authorList>
    </citation>
    <scope>NUCLEOTIDE SEQUENCE [LARGE SCALE GENOMIC DNA]</scope>
    <source>
        <strain>ATCC 39315 / El Tor Inaba N16961</strain>
    </source>
</reference>
<dbReference type="EMBL" id="AE003853">
    <property type="protein sequence ID" value="AAF96640.1"/>
    <property type="molecule type" value="Genomic_DNA"/>
</dbReference>
<dbReference type="PIR" id="H82421">
    <property type="entry name" value="H82421"/>
</dbReference>
<dbReference type="RefSeq" id="NP_233128.1">
    <property type="nucleotide sequence ID" value="NC_002506.1"/>
</dbReference>
<dbReference type="RefSeq" id="WP_001089529.1">
    <property type="nucleotide sequence ID" value="NZ_LT906615.1"/>
</dbReference>
<dbReference type="SMR" id="Q9KLK2"/>
<dbReference type="STRING" id="243277.VC_A0741"/>
<dbReference type="DNASU" id="2611921"/>
<dbReference type="EnsemblBacteria" id="AAF96640">
    <property type="protein sequence ID" value="AAF96640"/>
    <property type="gene ID" value="VC_A0741"/>
</dbReference>
<dbReference type="KEGG" id="vch:VC_A0741"/>
<dbReference type="PATRIC" id="fig|243277.26.peg.3367"/>
<dbReference type="eggNOG" id="COG2926">
    <property type="taxonomic scope" value="Bacteria"/>
</dbReference>
<dbReference type="HOGENOM" id="CLU_153146_0_0_6"/>
<dbReference type="Proteomes" id="UP000000584">
    <property type="component" value="Chromosome 2"/>
</dbReference>
<dbReference type="GO" id="GO:0005829">
    <property type="term" value="C:cytosol"/>
    <property type="evidence" value="ECO:0000318"/>
    <property type="project" value="GO_Central"/>
</dbReference>
<dbReference type="HAMAP" id="MF_00683">
    <property type="entry name" value="Pole_loc_TmaR"/>
    <property type="match status" value="1"/>
</dbReference>
<dbReference type="InterPro" id="IPR007458">
    <property type="entry name" value="DUF496"/>
</dbReference>
<dbReference type="NCBIfam" id="NF003844">
    <property type="entry name" value="PRK05423.1"/>
    <property type="match status" value="1"/>
</dbReference>
<dbReference type="PANTHER" id="PTHR39591">
    <property type="entry name" value="UPF0265 PROTEIN YEEX"/>
    <property type="match status" value="1"/>
</dbReference>
<dbReference type="PANTHER" id="PTHR39591:SF1">
    <property type="entry name" value="UPF0265 PROTEIN YEEX"/>
    <property type="match status" value="1"/>
</dbReference>
<dbReference type="Pfam" id="PF04363">
    <property type="entry name" value="DUF496"/>
    <property type="match status" value="1"/>
</dbReference>
<dbReference type="PIRSF" id="PIRSF028773">
    <property type="entry name" value="UCP028773"/>
    <property type="match status" value="1"/>
</dbReference>